<feature type="chain" id="PRO_1000122070" description="Exodeoxyribonuclease 7 large subunit">
    <location>
        <begin position="1"/>
        <end position="445"/>
    </location>
</feature>
<sequence>MDRSQYLTVSELTKYLKMKFDRDPYLHTVYLTGELSNFRLRQKHQYFSLKDDNAVIDAVMFEHQFRKIKFTPEQGMKVCVVGHVSLYEKSGRYQIYIDRMEPDGLGSLYLAFEQLKKKLSAEGLFNLPKKQIPMFPKRIAVVTSIDGAVIRDINTTVRRRYPIAQVVLYPTVVQGDKAAADIARQINRANDRGDFDTLIIGRGGGSMEDLWPFNEEVVARAIANSKIPVISSVGHETDTTIADLVADQRAATPTAAAELATPVKLNDALMTLKDDQNRLLNTMRTKINFDRQQLNKQLQSYIFQQPTRLYENYAQKVDQLTQQLGQAAQNKMQELQMNVERLSGRLTAASPLHRVQQQEQLVDQLKKQLVTASLASQNEKKQQVTTLIKQLDSLSPLKIMSRGYTYVTSDEKVVNHASQLTVGQNVHLHFDDGEVQAEIKKVKEH</sequence>
<organism>
    <name type="scientific">Limosilactobacillus reuteri (strain DSM 20016)</name>
    <name type="common">Lactobacillus reuteri</name>
    <dbReference type="NCBI Taxonomy" id="557436"/>
    <lineage>
        <taxon>Bacteria</taxon>
        <taxon>Bacillati</taxon>
        <taxon>Bacillota</taxon>
        <taxon>Bacilli</taxon>
        <taxon>Lactobacillales</taxon>
        <taxon>Lactobacillaceae</taxon>
        <taxon>Limosilactobacillus</taxon>
    </lineage>
</organism>
<accession>A5VKR6</accession>
<protein>
    <recommendedName>
        <fullName evidence="1">Exodeoxyribonuclease 7 large subunit</fullName>
        <ecNumber evidence="1">3.1.11.6</ecNumber>
    </recommendedName>
    <alternativeName>
        <fullName evidence="1">Exodeoxyribonuclease VII large subunit</fullName>
        <shortName evidence="1">Exonuclease VII large subunit</shortName>
    </alternativeName>
</protein>
<evidence type="ECO:0000255" key="1">
    <source>
        <dbReference type="HAMAP-Rule" id="MF_00378"/>
    </source>
</evidence>
<comment type="function">
    <text evidence="1">Bidirectionally degrades single-stranded DNA into large acid-insoluble oligonucleotides, which are then degraded further into small acid-soluble oligonucleotides.</text>
</comment>
<comment type="catalytic activity">
    <reaction evidence="1">
        <text>Exonucleolytic cleavage in either 5'- to 3'- or 3'- to 5'-direction to yield nucleoside 5'-phosphates.</text>
        <dbReference type="EC" id="3.1.11.6"/>
    </reaction>
</comment>
<comment type="subunit">
    <text evidence="1">Heterooligomer composed of large and small subunits.</text>
</comment>
<comment type="subcellular location">
    <subcellularLocation>
        <location evidence="1">Cytoplasm</location>
    </subcellularLocation>
</comment>
<comment type="similarity">
    <text evidence="1">Belongs to the XseA family.</text>
</comment>
<reference key="1">
    <citation type="journal article" date="2011" name="PLoS Genet.">
        <title>The evolution of host specialization in the vertebrate gut symbiont Lactobacillus reuteri.</title>
        <authorList>
            <person name="Frese S.A."/>
            <person name="Benson A.K."/>
            <person name="Tannock G.W."/>
            <person name="Loach D.M."/>
            <person name="Kim J."/>
            <person name="Zhang M."/>
            <person name="Oh P.L."/>
            <person name="Heng N.C."/>
            <person name="Patil P.B."/>
            <person name="Juge N."/>
            <person name="Mackenzie D.A."/>
            <person name="Pearson B.M."/>
            <person name="Lapidus A."/>
            <person name="Dalin E."/>
            <person name="Tice H."/>
            <person name="Goltsman E."/>
            <person name="Land M."/>
            <person name="Hauser L."/>
            <person name="Ivanova N."/>
            <person name="Kyrpides N.C."/>
            <person name="Walter J."/>
        </authorList>
    </citation>
    <scope>NUCLEOTIDE SEQUENCE [LARGE SCALE GENOMIC DNA]</scope>
    <source>
        <strain>DSM 20016</strain>
    </source>
</reference>
<proteinExistence type="inferred from homology"/>
<gene>
    <name evidence="1" type="primary">xseA</name>
    <name type="ordered locus">Lreu_1183</name>
</gene>
<keyword id="KW-0963">Cytoplasm</keyword>
<keyword id="KW-0269">Exonuclease</keyword>
<keyword id="KW-0378">Hydrolase</keyword>
<keyword id="KW-0540">Nuclease</keyword>
<keyword id="KW-1185">Reference proteome</keyword>
<dbReference type="EC" id="3.1.11.6" evidence="1"/>
<dbReference type="EMBL" id="CP000705">
    <property type="protein sequence ID" value="ABQ83440.1"/>
    <property type="molecule type" value="Genomic_DNA"/>
</dbReference>
<dbReference type="RefSeq" id="WP_003668406.1">
    <property type="nucleotide sequence ID" value="NC_009513.1"/>
</dbReference>
<dbReference type="SMR" id="A5VKR6"/>
<dbReference type="STRING" id="557436.Lreu_1183"/>
<dbReference type="KEGG" id="lre:Lreu_1183"/>
<dbReference type="PATRIC" id="fig|557436.17.peg.49"/>
<dbReference type="eggNOG" id="COG1570">
    <property type="taxonomic scope" value="Bacteria"/>
</dbReference>
<dbReference type="HOGENOM" id="CLU_023625_2_0_9"/>
<dbReference type="OMA" id="WPAVRFE"/>
<dbReference type="Proteomes" id="UP000001991">
    <property type="component" value="Chromosome"/>
</dbReference>
<dbReference type="GO" id="GO:0005737">
    <property type="term" value="C:cytoplasm"/>
    <property type="evidence" value="ECO:0007669"/>
    <property type="project" value="UniProtKB-SubCell"/>
</dbReference>
<dbReference type="GO" id="GO:0009318">
    <property type="term" value="C:exodeoxyribonuclease VII complex"/>
    <property type="evidence" value="ECO:0007669"/>
    <property type="project" value="InterPro"/>
</dbReference>
<dbReference type="GO" id="GO:0008855">
    <property type="term" value="F:exodeoxyribonuclease VII activity"/>
    <property type="evidence" value="ECO:0007669"/>
    <property type="project" value="UniProtKB-UniRule"/>
</dbReference>
<dbReference type="GO" id="GO:0003676">
    <property type="term" value="F:nucleic acid binding"/>
    <property type="evidence" value="ECO:0007669"/>
    <property type="project" value="InterPro"/>
</dbReference>
<dbReference type="GO" id="GO:0006308">
    <property type="term" value="P:DNA catabolic process"/>
    <property type="evidence" value="ECO:0007669"/>
    <property type="project" value="UniProtKB-UniRule"/>
</dbReference>
<dbReference type="CDD" id="cd04489">
    <property type="entry name" value="ExoVII_LU_OBF"/>
    <property type="match status" value="1"/>
</dbReference>
<dbReference type="HAMAP" id="MF_00378">
    <property type="entry name" value="Exonuc_7_L"/>
    <property type="match status" value="1"/>
</dbReference>
<dbReference type="InterPro" id="IPR003753">
    <property type="entry name" value="Exonuc_VII_L"/>
</dbReference>
<dbReference type="InterPro" id="IPR020579">
    <property type="entry name" value="Exonuc_VII_lsu_C"/>
</dbReference>
<dbReference type="InterPro" id="IPR025824">
    <property type="entry name" value="OB-fold_nuc-bd_dom"/>
</dbReference>
<dbReference type="NCBIfam" id="TIGR00237">
    <property type="entry name" value="xseA"/>
    <property type="match status" value="1"/>
</dbReference>
<dbReference type="PANTHER" id="PTHR30008">
    <property type="entry name" value="EXODEOXYRIBONUCLEASE 7 LARGE SUBUNIT"/>
    <property type="match status" value="1"/>
</dbReference>
<dbReference type="PANTHER" id="PTHR30008:SF0">
    <property type="entry name" value="EXODEOXYRIBONUCLEASE 7 LARGE SUBUNIT"/>
    <property type="match status" value="1"/>
</dbReference>
<dbReference type="Pfam" id="PF02601">
    <property type="entry name" value="Exonuc_VII_L"/>
    <property type="match status" value="1"/>
</dbReference>
<dbReference type="Pfam" id="PF13742">
    <property type="entry name" value="tRNA_anti_2"/>
    <property type="match status" value="1"/>
</dbReference>
<name>EX7L_LIMRD</name>